<accession>A9NB02</accession>
<comment type="function">
    <text evidence="1">Involved in the final reduction of the elongation cycle of fatty acid synthesis (FAS II). Catalyzes the reduction of a carbon-carbon double bond in an enoyl moiety that is covalently linked to an acyl carrier protein (ACP).</text>
</comment>
<comment type="catalytic activity">
    <reaction evidence="1">
        <text>a 2,3-saturated acyl-[ACP] + NAD(+) = a (2E)-enoyl-[ACP] + NADH + H(+)</text>
        <dbReference type="Rhea" id="RHEA:10240"/>
        <dbReference type="Rhea" id="RHEA-COMP:9925"/>
        <dbReference type="Rhea" id="RHEA-COMP:9926"/>
        <dbReference type="ChEBI" id="CHEBI:15378"/>
        <dbReference type="ChEBI" id="CHEBI:57540"/>
        <dbReference type="ChEBI" id="CHEBI:57945"/>
        <dbReference type="ChEBI" id="CHEBI:78784"/>
        <dbReference type="ChEBI" id="CHEBI:78785"/>
        <dbReference type="EC" id="1.3.1.9"/>
    </reaction>
</comment>
<comment type="pathway">
    <text evidence="1">Lipid metabolism; fatty acid biosynthesis.</text>
</comment>
<comment type="subunit">
    <text evidence="1">Monomer.</text>
</comment>
<comment type="similarity">
    <text evidence="1">Belongs to the TER reductase family.</text>
</comment>
<organism>
    <name type="scientific">Coxiella burnetii (strain RSA 331 / Henzerling II)</name>
    <dbReference type="NCBI Taxonomy" id="360115"/>
    <lineage>
        <taxon>Bacteria</taxon>
        <taxon>Pseudomonadati</taxon>
        <taxon>Pseudomonadota</taxon>
        <taxon>Gammaproteobacteria</taxon>
        <taxon>Legionellales</taxon>
        <taxon>Coxiellaceae</taxon>
        <taxon>Coxiella</taxon>
    </lineage>
</organism>
<evidence type="ECO:0000255" key="1">
    <source>
        <dbReference type="HAMAP-Rule" id="MF_01838"/>
    </source>
</evidence>
<name>FABV_COXBR</name>
<sequence length="406" mass="44875">MIVQPKVRGFICTTAHPEGCARHVGEWINYAKQEPSLTGGPQKVLIIGASTGFGLASRIVAAFGAGAKTIGVFFERPASGKRTASPGWYNTAAFEKTALAAGLYAKSINGDAFSDEIKQQTIDLIQKDWQGGVDLVIYSIASPRRVHPRTGEIFNSVLKPIGQTYHNKTVDVMTGEVSPVSIEPATEKEIRDTEAVMGGDDWALWINALFKYNCLAEGVKTVAFTYIGPELTHAVYRNGTIGRAKLHLEKTARELDTQLESALSGQALISVNKALVTQASAAIPVVPLYISLLYKIMKEKNIHEGCIEQMWRLFKERLYSNQNIPTDSEGRIRIDDWEMREDVQAEIKRLWESINTGNVETVSDIAGYREDFYKLFGFGLNGIDYERGVEIEKAIPSITVTPENPE</sequence>
<protein>
    <recommendedName>
        <fullName evidence="1">Enoyl-[acyl-carrier-protein] reductase [NADH]</fullName>
        <shortName evidence="1">ENR</shortName>
        <ecNumber evidence="1">1.3.1.9</ecNumber>
    </recommendedName>
</protein>
<keyword id="KW-0275">Fatty acid biosynthesis</keyword>
<keyword id="KW-0276">Fatty acid metabolism</keyword>
<keyword id="KW-0444">Lipid biosynthesis</keyword>
<keyword id="KW-0443">Lipid metabolism</keyword>
<keyword id="KW-0520">NAD</keyword>
<keyword id="KW-0560">Oxidoreductase</keyword>
<dbReference type="EC" id="1.3.1.9" evidence="1"/>
<dbReference type="EMBL" id="CP000890">
    <property type="protein sequence ID" value="ABX78225.1"/>
    <property type="molecule type" value="Genomic_DNA"/>
</dbReference>
<dbReference type="RefSeq" id="WP_010957471.1">
    <property type="nucleotide sequence ID" value="NC_010117.1"/>
</dbReference>
<dbReference type="SMR" id="A9NB02"/>
<dbReference type="KEGG" id="cbs:COXBURSA331_A0369"/>
<dbReference type="HOGENOM" id="CLU_057698_1_0_6"/>
<dbReference type="UniPathway" id="UPA00094"/>
<dbReference type="GO" id="GO:0004318">
    <property type="term" value="F:enoyl-[acyl-carrier-protein] reductase (NADH) activity"/>
    <property type="evidence" value="ECO:0007669"/>
    <property type="project" value="UniProtKB-UniRule"/>
</dbReference>
<dbReference type="GO" id="GO:0051287">
    <property type="term" value="F:NAD binding"/>
    <property type="evidence" value="ECO:0007669"/>
    <property type="project" value="UniProtKB-UniRule"/>
</dbReference>
<dbReference type="GO" id="GO:0050343">
    <property type="term" value="F:trans-2-enoyl-CoA reductase (NADH) activity"/>
    <property type="evidence" value="ECO:0007669"/>
    <property type="project" value="TreeGrafter"/>
</dbReference>
<dbReference type="GO" id="GO:0006633">
    <property type="term" value="P:fatty acid biosynthetic process"/>
    <property type="evidence" value="ECO:0007669"/>
    <property type="project" value="UniProtKB-UniRule"/>
</dbReference>
<dbReference type="FunFam" id="3.40.50.720:FF:000221">
    <property type="entry name" value="Enoyl-[acyl-carrier-protein] reductase [NADH]"/>
    <property type="match status" value="1"/>
</dbReference>
<dbReference type="Gene3D" id="3.40.50.720">
    <property type="entry name" value="NAD(P)-binding Rossmann-like Domain"/>
    <property type="match status" value="1"/>
</dbReference>
<dbReference type="HAMAP" id="MF_01838">
    <property type="entry name" value="FabV_reductase"/>
    <property type="match status" value="1"/>
</dbReference>
<dbReference type="InterPro" id="IPR024906">
    <property type="entry name" value="Eno_Rdtase_FAD-bd_dom"/>
</dbReference>
<dbReference type="InterPro" id="IPR024910">
    <property type="entry name" value="Enoyl-CoA_Rdtase_cat_dom"/>
</dbReference>
<dbReference type="InterPro" id="IPR050048">
    <property type="entry name" value="FabV-like_NADH_b"/>
</dbReference>
<dbReference type="InterPro" id="IPR010758">
    <property type="entry name" value="Trans-2-enoyl-CoA_reductase"/>
</dbReference>
<dbReference type="NCBIfam" id="NF043048">
    <property type="entry name" value="EnoyACPredFabV"/>
    <property type="match status" value="1"/>
</dbReference>
<dbReference type="NCBIfam" id="NF010177">
    <property type="entry name" value="PRK13656.1"/>
    <property type="match status" value="1"/>
</dbReference>
<dbReference type="PANTHER" id="PTHR37480">
    <property type="entry name" value="ENOYL-[ACYL-CARRIER-PROTEIN] REDUCTASE [NADH]"/>
    <property type="match status" value="1"/>
</dbReference>
<dbReference type="PANTHER" id="PTHR37480:SF1">
    <property type="entry name" value="ENOYL-[ACYL-CARRIER-PROTEIN] REDUCTASE [NADH]"/>
    <property type="match status" value="1"/>
</dbReference>
<dbReference type="Pfam" id="PF07055">
    <property type="entry name" value="Eno-Rase_FAD_bd"/>
    <property type="match status" value="1"/>
</dbReference>
<dbReference type="Pfam" id="PF12242">
    <property type="entry name" value="Eno-Rase_NADH_b"/>
    <property type="match status" value="1"/>
</dbReference>
<dbReference type="Pfam" id="PF12241">
    <property type="entry name" value="Enoyl_reductase"/>
    <property type="match status" value="1"/>
</dbReference>
<feature type="chain" id="PRO_1000088452" description="Enoyl-[acyl-carrier-protein] reductase [NADH]">
    <location>
        <begin position="1"/>
        <end position="406"/>
    </location>
</feature>
<feature type="active site" description="Proton donor" evidence="1">
    <location>
        <position position="236"/>
    </location>
</feature>
<feature type="binding site" evidence="1">
    <location>
        <begin position="48"/>
        <end position="53"/>
    </location>
    <ligand>
        <name>NAD(+)</name>
        <dbReference type="ChEBI" id="CHEBI:57540"/>
    </ligand>
</feature>
<feature type="binding site" evidence="1">
    <location>
        <begin position="74"/>
        <end position="75"/>
    </location>
    <ligand>
        <name>NAD(+)</name>
        <dbReference type="ChEBI" id="CHEBI:57540"/>
    </ligand>
</feature>
<feature type="binding site" evidence="1">
    <location>
        <begin position="111"/>
        <end position="112"/>
    </location>
    <ligand>
        <name>NAD(+)</name>
        <dbReference type="ChEBI" id="CHEBI:57540"/>
    </ligand>
</feature>
<feature type="binding site" evidence="1">
    <location>
        <begin position="140"/>
        <end position="141"/>
    </location>
    <ligand>
        <name>NAD(+)</name>
        <dbReference type="ChEBI" id="CHEBI:57540"/>
    </ligand>
</feature>
<feature type="binding site" evidence="1">
    <location>
        <position position="226"/>
    </location>
    <ligand>
        <name>substrate</name>
    </ligand>
</feature>
<feature type="binding site" evidence="1">
    <location>
        <position position="245"/>
    </location>
    <ligand>
        <name>NAD(+)</name>
        <dbReference type="ChEBI" id="CHEBI:57540"/>
    </ligand>
</feature>
<feature type="binding site" evidence="1">
    <location>
        <begin position="275"/>
        <end position="277"/>
    </location>
    <ligand>
        <name>NAD(+)</name>
        <dbReference type="ChEBI" id="CHEBI:57540"/>
    </ligand>
</feature>
<feature type="site" description="Plays an important role in discriminating NADH against NADPH" evidence="1">
    <location>
        <position position="75"/>
    </location>
</feature>
<reference key="1">
    <citation type="submission" date="2007-11" db="EMBL/GenBank/DDBJ databases">
        <title>Genome sequencing of phylogenetically and phenotypically diverse Coxiella burnetii isolates.</title>
        <authorList>
            <person name="Seshadri R."/>
            <person name="Samuel J.E."/>
        </authorList>
    </citation>
    <scope>NUCLEOTIDE SEQUENCE [LARGE SCALE GENOMIC DNA]</scope>
    <source>
        <strain>RSA 331 / Henzerling II</strain>
    </source>
</reference>
<proteinExistence type="inferred from homology"/>
<gene>
    <name evidence="1" type="primary">fabV</name>
    <name type="ordered locus">COXBURSA331_A0369</name>
</gene>